<evidence type="ECO:0000250" key="1">
    <source>
        <dbReference type="UniProtKB" id="Q00514"/>
    </source>
</evidence>
<evidence type="ECO:0000255" key="2"/>
<evidence type="ECO:0000255" key="3">
    <source>
        <dbReference type="PROSITE-ProRule" id="PRU01070"/>
    </source>
</evidence>
<evidence type="ECO:0000256" key="4">
    <source>
        <dbReference type="SAM" id="MobiDB-lite"/>
    </source>
</evidence>
<evidence type="ECO:0000269" key="5">
    <source>
    </source>
</evidence>
<evidence type="ECO:0000305" key="6"/>
<comment type="function">
    <text evidence="1">Core component of the type II secretion system required for the energy-dependent secretion of extracellular factors such as proteases and toxins from the periplasm. Pseudopilin (pilin-like) protein that polymerizes to form the pseudopilus. Further polymerization triggers pseudopilus growth.</text>
</comment>
<comment type="subunit">
    <text evidence="1">Type II secretion system is composed of four main components: the outer membrane complex, the inner membrane complex, the cytoplasmic secretion ATPase and the periplasm-spanning pseudopilus. Forms homomultimers.</text>
</comment>
<comment type="subcellular location">
    <subcellularLocation>
        <location evidence="1">Cell inner membrane</location>
        <topology evidence="2">Single-pass membrane protein</topology>
    </subcellularLocation>
</comment>
<comment type="induction">
    <text evidence="5">Silenced by the DNA-binding protein H-NS under standard growth conditions.</text>
</comment>
<comment type="PTM">
    <text evidence="1">Cleaved by the prepilin peptidase.</text>
</comment>
<comment type="PTM">
    <text evidence="1">Methylated by prepilin peptidase at the amino group of the N-terminal phenylalanine once the leader sequence is cleaved.</text>
</comment>
<comment type="miscellaneous">
    <text>Part of a cryptic operon that encodes proteins involved in type II secretion machinery in other organisms, but is not expressed in strain K12.</text>
</comment>
<comment type="similarity">
    <text evidence="6">Belongs to the GSP G family.</text>
</comment>
<reference key="1">
    <citation type="journal article" date="1995" name="J. Bacteriol.">
        <title>Identification of the hopG gene, a component of Escherichia coli K-12 type II export system, and its conservation among different pathogenic Escherichia coli and Shigella isolates.</title>
        <authorList>
            <person name="Stojiljkovic I."/>
            <person name="Schoenherr R."/>
            <person name="Kusters J.G."/>
        </authorList>
    </citation>
    <scope>NUCLEOTIDE SEQUENCE [GENOMIC DNA]</scope>
    <source>
        <strain>K12</strain>
    </source>
</reference>
<reference key="2">
    <citation type="journal article" date="1997" name="Science">
        <title>The complete genome sequence of Escherichia coli K-12.</title>
        <authorList>
            <person name="Blattner F.R."/>
            <person name="Plunkett G. III"/>
            <person name="Bloch C.A."/>
            <person name="Perna N.T."/>
            <person name="Burland V."/>
            <person name="Riley M."/>
            <person name="Collado-Vides J."/>
            <person name="Glasner J.D."/>
            <person name="Rode C.K."/>
            <person name="Mayhew G.F."/>
            <person name="Gregor J."/>
            <person name="Davis N.W."/>
            <person name="Kirkpatrick H.A."/>
            <person name="Goeden M.A."/>
            <person name="Rose D.J."/>
            <person name="Mau B."/>
            <person name="Shao Y."/>
        </authorList>
    </citation>
    <scope>NUCLEOTIDE SEQUENCE [LARGE SCALE GENOMIC DNA]</scope>
    <source>
        <strain>K12 / MG1655 / ATCC 47076</strain>
    </source>
</reference>
<reference key="3">
    <citation type="journal article" date="2006" name="Mol. Syst. Biol.">
        <title>Highly accurate genome sequences of Escherichia coli K-12 strains MG1655 and W3110.</title>
        <authorList>
            <person name="Hayashi K."/>
            <person name="Morooka N."/>
            <person name="Yamamoto Y."/>
            <person name="Fujita K."/>
            <person name="Isono K."/>
            <person name="Choi S."/>
            <person name="Ohtsubo E."/>
            <person name="Baba T."/>
            <person name="Wanner B.L."/>
            <person name="Mori H."/>
            <person name="Horiuchi T."/>
        </authorList>
    </citation>
    <scope>NUCLEOTIDE SEQUENCE [LARGE SCALE GENOMIC DNA]</scope>
    <source>
        <strain>K12 / W3110 / ATCC 27325 / DSM 5911</strain>
    </source>
</reference>
<reference key="4">
    <citation type="journal article" date="1996" name="J. Bacteriol.">
        <title>The cryptic general secretory pathway (gsp) operon of Escherichia coli K-12 encodes functional proteins.</title>
        <authorList>
            <person name="Francetic O."/>
            <person name="Pugsley A.P."/>
        </authorList>
    </citation>
    <scope>LACK OF EXPRESSION</scope>
    <scope>GENE NAME</scope>
    <source>
        <strain>K12 / MC4100 / ATCC 35695 / DSM 6574</strain>
    </source>
</reference>
<reference key="5">
    <citation type="journal article" date="2000" name="EMBO J.">
        <title>Expression of the endogenous type II secretion pathway in Escherichia coli leads to chitinase secretion.</title>
        <authorList>
            <person name="Francetic O."/>
            <person name="Belin D."/>
            <person name="Badaut C."/>
            <person name="Pugsley A.P."/>
        </authorList>
    </citation>
    <scope>LACK OF EXPRESSION</scope>
    <scope>TRANSCRIPTIONAL REGULATION</scope>
    <source>
        <strain>K12 / MC4100 / ATCC 35695 / DSM 6574</strain>
    </source>
</reference>
<protein>
    <recommendedName>
        <fullName>Type II secretion system core protein G</fullName>
        <shortName>T2SS core protein G</shortName>
    </recommendedName>
    <alternativeName>
        <fullName>Protein transport protein HofG</fullName>
    </alternativeName>
    <alternativeName>
        <fullName>Putative general secretion pathway protein G</fullName>
    </alternativeName>
</protein>
<gene>
    <name type="primary">gspG</name>
    <name type="synonym">hofG</name>
    <name type="synonym">hopG</name>
    <name type="ordered locus">b3328</name>
    <name type="ordered locus">JW3290</name>
</gene>
<organism>
    <name type="scientific">Escherichia coli (strain K12)</name>
    <dbReference type="NCBI Taxonomy" id="83333"/>
    <lineage>
        <taxon>Bacteria</taxon>
        <taxon>Pseudomonadati</taxon>
        <taxon>Pseudomonadota</taxon>
        <taxon>Gammaproteobacteria</taxon>
        <taxon>Enterobacterales</taxon>
        <taxon>Enterobacteriaceae</taxon>
        <taxon>Escherichia</taxon>
    </lineage>
</organism>
<accession>P41442</accession>
<accession>Q2M6Z3</accession>
<sequence length="145" mass="15905">MRATDKQRGFTLLEIMVVIVIIGVLASLVVPNLMGNKEKADKQKAVSDIVALENALDMYKLDNHHYPTTNQGLESLVEAPTLPPLAANYNKEGYIKRLPADPWGNDYVLVNPGEHGAYDLLSAGPDGEMGTEDDITNWGLSKKKK</sequence>
<feature type="propeptide" id="PRO_0000449505" description="Leader sequence" evidence="3">
    <location>
        <begin position="1"/>
        <end position="9"/>
    </location>
</feature>
<feature type="chain" id="PRO_0000024201" description="Type II secretion system core protein G">
    <location>
        <begin position="10"/>
        <end position="145"/>
    </location>
</feature>
<feature type="transmembrane region" description="Helical" evidence="2">
    <location>
        <begin position="10"/>
        <end position="30"/>
    </location>
</feature>
<feature type="region of interest" description="Disordered" evidence="4">
    <location>
        <begin position="123"/>
        <end position="145"/>
    </location>
</feature>
<feature type="modified residue" description="N-methylphenylalanine" evidence="3">
    <location>
        <position position="10"/>
    </location>
</feature>
<proteinExistence type="evidence at transcript level"/>
<keyword id="KW-0997">Cell inner membrane</keyword>
<keyword id="KW-1003">Cell membrane</keyword>
<keyword id="KW-0472">Membrane</keyword>
<keyword id="KW-0488">Methylation</keyword>
<keyword id="KW-0653">Protein transport</keyword>
<keyword id="KW-1185">Reference proteome</keyword>
<keyword id="KW-0812">Transmembrane</keyword>
<keyword id="KW-1133">Transmembrane helix</keyword>
<keyword id="KW-0813">Transport</keyword>
<name>GSPG_ECOLI</name>
<dbReference type="EMBL" id="U20786">
    <property type="protein sequence ID" value="AAA69031.1"/>
    <property type="molecule type" value="Genomic_DNA"/>
</dbReference>
<dbReference type="EMBL" id="U18997">
    <property type="protein sequence ID" value="AAA58125.1"/>
    <property type="molecule type" value="Genomic_DNA"/>
</dbReference>
<dbReference type="EMBL" id="U00096">
    <property type="protein sequence ID" value="AAC76353.1"/>
    <property type="molecule type" value="Genomic_DNA"/>
</dbReference>
<dbReference type="EMBL" id="AP009048">
    <property type="protein sequence ID" value="BAE77963.1"/>
    <property type="molecule type" value="Genomic_DNA"/>
</dbReference>
<dbReference type="PIR" id="B56150">
    <property type="entry name" value="B56150"/>
</dbReference>
<dbReference type="RefSeq" id="NP_417787.1">
    <property type="nucleotide sequence ID" value="NC_000913.3"/>
</dbReference>
<dbReference type="RefSeq" id="WP_001202874.1">
    <property type="nucleotide sequence ID" value="NZ_SSZK01000040.1"/>
</dbReference>
<dbReference type="SMR" id="P41442"/>
<dbReference type="BioGRID" id="4262167">
    <property type="interactions" value="250"/>
</dbReference>
<dbReference type="FunCoup" id="P41442">
    <property type="interactions" value="304"/>
</dbReference>
<dbReference type="STRING" id="511145.b3328"/>
<dbReference type="PaxDb" id="511145-b3328"/>
<dbReference type="EnsemblBacteria" id="AAC76353">
    <property type="protein sequence ID" value="AAC76353"/>
    <property type="gene ID" value="b3328"/>
</dbReference>
<dbReference type="GeneID" id="947827"/>
<dbReference type="KEGG" id="ecj:JW3290"/>
<dbReference type="KEGG" id="eco:b3328"/>
<dbReference type="KEGG" id="ecoc:C3026_18080"/>
<dbReference type="PATRIC" id="fig|1411691.4.peg.3403"/>
<dbReference type="EchoBASE" id="EB2723"/>
<dbReference type="eggNOG" id="COG2165">
    <property type="taxonomic scope" value="Bacteria"/>
</dbReference>
<dbReference type="HOGENOM" id="CLU_091705_2_1_6"/>
<dbReference type="InParanoid" id="P41442"/>
<dbReference type="OMA" id="PRIMDRP"/>
<dbReference type="OrthoDB" id="9795612at2"/>
<dbReference type="PhylomeDB" id="P41442"/>
<dbReference type="BioCyc" id="EcoCyc:G7706-MONOMER"/>
<dbReference type="BioCyc" id="MetaCyc:G7706-MONOMER"/>
<dbReference type="PRO" id="PR:P41442"/>
<dbReference type="Proteomes" id="UP000000625">
    <property type="component" value="Chromosome"/>
</dbReference>
<dbReference type="GO" id="GO:0005886">
    <property type="term" value="C:plasma membrane"/>
    <property type="evidence" value="ECO:0007669"/>
    <property type="project" value="UniProtKB-SubCell"/>
</dbReference>
<dbReference type="GO" id="GO:0015627">
    <property type="term" value="C:type II protein secretion system complex"/>
    <property type="evidence" value="ECO:0000318"/>
    <property type="project" value="GO_Central"/>
</dbReference>
<dbReference type="GO" id="GO:0015628">
    <property type="term" value="P:protein secretion by the type II secretion system"/>
    <property type="evidence" value="ECO:0000318"/>
    <property type="project" value="GO_Central"/>
</dbReference>
<dbReference type="Gene3D" id="3.30.700.10">
    <property type="entry name" value="Glycoprotein, Type 4 Pilin"/>
    <property type="match status" value="1"/>
</dbReference>
<dbReference type="InterPro" id="IPR000983">
    <property type="entry name" value="Bac_GSPG_pilin"/>
</dbReference>
<dbReference type="InterPro" id="IPR012902">
    <property type="entry name" value="N_methyl_site"/>
</dbReference>
<dbReference type="InterPro" id="IPR045584">
    <property type="entry name" value="Pilin-like"/>
</dbReference>
<dbReference type="InterPro" id="IPR013545">
    <property type="entry name" value="T2SS_protein-GspG_C"/>
</dbReference>
<dbReference type="InterPro" id="IPR050470">
    <property type="entry name" value="T4P/T2SS_Core"/>
</dbReference>
<dbReference type="InterPro" id="IPR010054">
    <property type="entry name" value="Type2_sec_GspG"/>
</dbReference>
<dbReference type="NCBIfam" id="TIGR02532">
    <property type="entry name" value="IV_pilin_GFxxxE"/>
    <property type="match status" value="1"/>
</dbReference>
<dbReference type="NCBIfam" id="TIGR01710">
    <property type="entry name" value="typeII_sec_gspG"/>
    <property type="match status" value="1"/>
</dbReference>
<dbReference type="PANTHER" id="PTHR30093">
    <property type="entry name" value="GENERAL SECRETION PATHWAY PROTEIN G"/>
    <property type="match status" value="1"/>
</dbReference>
<dbReference type="PANTHER" id="PTHR30093:SF44">
    <property type="entry name" value="TYPE II SECRETION SYSTEM CORE PROTEIN G"/>
    <property type="match status" value="1"/>
</dbReference>
<dbReference type="Pfam" id="PF07963">
    <property type="entry name" value="N_methyl"/>
    <property type="match status" value="1"/>
</dbReference>
<dbReference type="Pfam" id="PF08334">
    <property type="entry name" value="T2SSG"/>
    <property type="match status" value="1"/>
</dbReference>
<dbReference type="PRINTS" id="PR00813">
    <property type="entry name" value="BCTERIALGSPG"/>
</dbReference>
<dbReference type="SUPFAM" id="SSF54523">
    <property type="entry name" value="Pili subunits"/>
    <property type="match status" value="1"/>
</dbReference>
<dbReference type="PROSITE" id="PS00409">
    <property type="entry name" value="PROKAR_NTER_METHYL"/>
    <property type="match status" value="1"/>
</dbReference>